<comment type="cofactor">
    <cofactor evidence="1">
        <name>Mg(2+)</name>
        <dbReference type="ChEBI" id="CHEBI:18420"/>
    </cofactor>
    <cofactor evidence="1">
        <name>Mn(2+)</name>
        <dbReference type="ChEBI" id="CHEBI:29035"/>
    </cofactor>
    <text evidence="1">Binds 2 magnesium or manganese ions per subunit.</text>
</comment>
<comment type="similarity">
    <text evidence="1">Belongs to the RimK family.</text>
</comment>
<reference key="1">
    <citation type="journal article" date="2009" name="PLoS ONE">
        <title>The complete genome of Teredinibacter turnerae T7901: an intracellular endosymbiont of marine wood-boring bivalves (shipworms).</title>
        <authorList>
            <person name="Yang J.C."/>
            <person name="Madupu R."/>
            <person name="Durkin A.S."/>
            <person name="Ekborg N.A."/>
            <person name="Pedamallu C.S."/>
            <person name="Hostetler J.B."/>
            <person name="Radune D."/>
            <person name="Toms B.S."/>
            <person name="Henrissat B."/>
            <person name="Coutinho P.M."/>
            <person name="Schwarz S."/>
            <person name="Field L."/>
            <person name="Trindade-Silva A.E."/>
            <person name="Soares C.A.G."/>
            <person name="Elshahawi S."/>
            <person name="Hanora A."/>
            <person name="Schmidt E.W."/>
            <person name="Haygood M.G."/>
            <person name="Posfai J."/>
            <person name="Benner J."/>
            <person name="Madinger C."/>
            <person name="Nove J."/>
            <person name="Anton B."/>
            <person name="Chaudhary K."/>
            <person name="Foster J."/>
            <person name="Holman A."/>
            <person name="Kumar S."/>
            <person name="Lessard P.A."/>
            <person name="Luyten Y.A."/>
            <person name="Slatko B."/>
            <person name="Wood N."/>
            <person name="Wu B."/>
            <person name="Teplitski M."/>
            <person name="Mougous J.D."/>
            <person name="Ward N."/>
            <person name="Eisen J.A."/>
            <person name="Badger J.H."/>
            <person name="Distel D.L."/>
        </authorList>
    </citation>
    <scope>NUCLEOTIDE SEQUENCE [LARGE SCALE GENOMIC DNA]</scope>
    <source>
        <strain>ATCC 39867 / T7901</strain>
    </source>
</reference>
<gene>
    <name evidence="1" type="primary">rimK</name>
    <name type="ordered locus">TERTU_3384</name>
</gene>
<sequence length="301" mass="32645">MRIAILSRGPALYSTRRLKEAAELRGHEVHIIDTLHCYMDITSSKPAVRYDGEELPYFDAVIPRIGASITFYGTSVVRQFEMMGTFVVNESVAISRSRDKLRSLQLLSRKGIGLPRTGFANKPDNIKDLIRNVGGAPVVIKLLEGTQGIGVVLAETPKTAEAMIEAFMGLKANILVQEFIKEAGGADIRCLVVGGRVIAAMKRQGAEGEFRSNLHRGGSAELVRLTKEERATAVNAAKIMGLNVCGVDVLRATRGPVVMEVNSSPGLEGIEYATGKDVAGMIVEFIEKNARPHRTKTRGKG</sequence>
<protein>
    <recommendedName>
        <fullName evidence="1">Probable alpha-L-glutamate ligase</fullName>
        <ecNumber evidence="1">6.3.2.-</ecNumber>
    </recommendedName>
</protein>
<accession>C5BQP1</accession>
<keyword id="KW-0067">ATP-binding</keyword>
<keyword id="KW-0436">Ligase</keyword>
<keyword id="KW-0460">Magnesium</keyword>
<keyword id="KW-0464">Manganese</keyword>
<keyword id="KW-0479">Metal-binding</keyword>
<keyword id="KW-0547">Nucleotide-binding</keyword>
<keyword id="KW-0648">Protein biosynthesis</keyword>
<keyword id="KW-1185">Reference proteome</keyword>
<dbReference type="EC" id="6.3.2.-" evidence="1"/>
<dbReference type="EMBL" id="CP001614">
    <property type="protein sequence ID" value="ACR11460.1"/>
    <property type="molecule type" value="Genomic_DNA"/>
</dbReference>
<dbReference type="RefSeq" id="WP_015817572.1">
    <property type="nucleotide sequence ID" value="NC_012997.1"/>
</dbReference>
<dbReference type="SMR" id="C5BQP1"/>
<dbReference type="STRING" id="377629.TERTU_3384"/>
<dbReference type="KEGG" id="ttu:TERTU_3384"/>
<dbReference type="eggNOG" id="COG0189">
    <property type="taxonomic scope" value="Bacteria"/>
</dbReference>
<dbReference type="HOGENOM" id="CLU_054353_0_1_6"/>
<dbReference type="OrthoDB" id="3865600at2"/>
<dbReference type="Proteomes" id="UP000009080">
    <property type="component" value="Chromosome"/>
</dbReference>
<dbReference type="GO" id="GO:0005737">
    <property type="term" value="C:cytoplasm"/>
    <property type="evidence" value="ECO:0007669"/>
    <property type="project" value="TreeGrafter"/>
</dbReference>
<dbReference type="GO" id="GO:0005524">
    <property type="term" value="F:ATP binding"/>
    <property type="evidence" value="ECO:0007669"/>
    <property type="project" value="UniProtKB-UniRule"/>
</dbReference>
<dbReference type="GO" id="GO:0046872">
    <property type="term" value="F:metal ion binding"/>
    <property type="evidence" value="ECO:0007669"/>
    <property type="project" value="UniProtKB-KW"/>
</dbReference>
<dbReference type="GO" id="GO:0018169">
    <property type="term" value="F:ribosomal S6-glutamic acid ligase activity"/>
    <property type="evidence" value="ECO:0007669"/>
    <property type="project" value="TreeGrafter"/>
</dbReference>
<dbReference type="GO" id="GO:0036211">
    <property type="term" value="P:protein modification process"/>
    <property type="evidence" value="ECO:0007669"/>
    <property type="project" value="InterPro"/>
</dbReference>
<dbReference type="GO" id="GO:0009432">
    <property type="term" value="P:SOS response"/>
    <property type="evidence" value="ECO:0007669"/>
    <property type="project" value="TreeGrafter"/>
</dbReference>
<dbReference type="GO" id="GO:0006412">
    <property type="term" value="P:translation"/>
    <property type="evidence" value="ECO:0007669"/>
    <property type="project" value="UniProtKB-KW"/>
</dbReference>
<dbReference type="FunFam" id="3.40.50.20:FF:000004">
    <property type="entry name" value="Probable alpha-L-glutamate ligase"/>
    <property type="match status" value="1"/>
</dbReference>
<dbReference type="FunFam" id="3.30.1490.20:FF:000005">
    <property type="entry name" value="Probable alpha-L-glutamate ligase 1"/>
    <property type="match status" value="1"/>
</dbReference>
<dbReference type="Gene3D" id="3.40.50.20">
    <property type="match status" value="1"/>
</dbReference>
<dbReference type="Gene3D" id="3.30.1490.20">
    <property type="entry name" value="ATP-grasp fold, A domain"/>
    <property type="match status" value="1"/>
</dbReference>
<dbReference type="Gene3D" id="3.30.470.20">
    <property type="entry name" value="ATP-grasp fold, B domain"/>
    <property type="match status" value="1"/>
</dbReference>
<dbReference type="HAMAP" id="MF_01552">
    <property type="entry name" value="RimK"/>
    <property type="match status" value="1"/>
</dbReference>
<dbReference type="InterPro" id="IPR011761">
    <property type="entry name" value="ATP-grasp"/>
</dbReference>
<dbReference type="InterPro" id="IPR013651">
    <property type="entry name" value="ATP-grasp_RimK-type"/>
</dbReference>
<dbReference type="InterPro" id="IPR013815">
    <property type="entry name" value="ATP_grasp_subdomain_1"/>
</dbReference>
<dbReference type="InterPro" id="IPR023533">
    <property type="entry name" value="RimK"/>
</dbReference>
<dbReference type="InterPro" id="IPR041107">
    <property type="entry name" value="Rimk_N"/>
</dbReference>
<dbReference type="InterPro" id="IPR004666">
    <property type="entry name" value="Rp_bS6_RimK/Lys_biosynth_LsyX"/>
</dbReference>
<dbReference type="NCBIfam" id="NF007764">
    <property type="entry name" value="PRK10446.1"/>
    <property type="match status" value="1"/>
</dbReference>
<dbReference type="NCBIfam" id="TIGR00768">
    <property type="entry name" value="rimK_fam"/>
    <property type="match status" value="1"/>
</dbReference>
<dbReference type="PANTHER" id="PTHR21621:SF7">
    <property type="entry name" value="RIBOSOMAL PROTEIN BS6--L-GLUTAMATE LIGASE"/>
    <property type="match status" value="1"/>
</dbReference>
<dbReference type="PANTHER" id="PTHR21621">
    <property type="entry name" value="RIBOSOMAL PROTEIN S6 MODIFICATION PROTEIN"/>
    <property type="match status" value="1"/>
</dbReference>
<dbReference type="Pfam" id="PF08443">
    <property type="entry name" value="RimK"/>
    <property type="match status" value="1"/>
</dbReference>
<dbReference type="Pfam" id="PF18030">
    <property type="entry name" value="Rimk_N"/>
    <property type="match status" value="1"/>
</dbReference>
<dbReference type="SUPFAM" id="SSF56059">
    <property type="entry name" value="Glutathione synthetase ATP-binding domain-like"/>
    <property type="match status" value="1"/>
</dbReference>
<dbReference type="PROSITE" id="PS50975">
    <property type="entry name" value="ATP_GRASP"/>
    <property type="match status" value="1"/>
</dbReference>
<name>RIMK_TERTT</name>
<organism>
    <name type="scientific">Teredinibacter turnerae (strain ATCC 39867 / T7901)</name>
    <dbReference type="NCBI Taxonomy" id="377629"/>
    <lineage>
        <taxon>Bacteria</taxon>
        <taxon>Pseudomonadati</taxon>
        <taxon>Pseudomonadota</taxon>
        <taxon>Gammaproteobacteria</taxon>
        <taxon>Cellvibrionales</taxon>
        <taxon>Cellvibrionaceae</taxon>
        <taxon>Teredinibacter</taxon>
    </lineage>
</organism>
<evidence type="ECO:0000255" key="1">
    <source>
        <dbReference type="HAMAP-Rule" id="MF_01552"/>
    </source>
</evidence>
<proteinExistence type="inferred from homology"/>
<feature type="chain" id="PRO_1000215478" description="Probable alpha-L-glutamate ligase">
    <location>
        <begin position="1"/>
        <end position="301"/>
    </location>
</feature>
<feature type="domain" description="ATP-grasp" evidence="1">
    <location>
        <begin position="104"/>
        <end position="287"/>
    </location>
</feature>
<feature type="binding site" evidence="1">
    <location>
        <position position="141"/>
    </location>
    <ligand>
        <name>ATP</name>
        <dbReference type="ChEBI" id="CHEBI:30616"/>
    </ligand>
</feature>
<feature type="binding site" evidence="1">
    <location>
        <begin position="178"/>
        <end position="179"/>
    </location>
    <ligand>
        <name>ATP</name>
        <dbReference type="ChEBI" id="CHEBI:30616"/>
    </ligand>
</feature>
<feature type="binding site" evidence="1">
    <location>
        <position position="187"/>
    </location>
    <ligand>
        <name>ATP</name>
        <dbReference type="ChEBI" id="CHEBI:30616"/>
    </ligand>
</feature>
<feature type="binding site" evidence="1">
    <location>
        <begin position="211"/>
        <end position="213"/>
    </location>
    <ligand>
        <name>ATP</name>
        <dbReference type="ChEBI" id="CHEBI:30616"/>
    </ligand>
</feature>
<feature type="binding site" evidence="1">
    <location>
        <position position="248"/>
    </location>
    <ligand>
        <name>Mg(2+)</name>
        <dbReference type="ChEBI" id="CHEBI:18420"/>
        <label>1</label>
    </ligand>
</feature>
<feature type="binding site" evidence="1">
    <location>
        <position position="248"/>
    </location>
    <ligand>
        <name>Mn(2+)</name>
        <dbReference type="ChEBI" id="CHEBI:29035"/>
        <label>1</label>
    </ligand>
</feature>
<feature type="binding site" evidence="1">
    <location>
        <position position="260"/>
    </location>
    <ligand>
        <name>Mg(2+)</name>
        <dbReference type="ChEBI" id="CHEBI:18420"/>
        <label>1</label>
    </ligand>
</feature>
<feature type="binding site" evidence="1">
    <location>
        <position position="260"/>
    </location>
    <ligand>
        <name>Mg(2+)</name>
        <dbReference type="ChEBI" id="CHEBI:18420"/>
        <label>2</label>
    </ligand>
</feature>
<feature type="binding site" evidence="1">
    <location>
        <position position="260"/>
    </location>
    <ligand>
        <name>Mn(2+)</name>
        <dbReference type="ChEBI" id="CHEBI:29035"/>
        <label>1</label>
    </ligand>
</feature>
<feature type="binding site" evidence="1">
    <location>
        <position position="260"/>
    </location>
    <ligand>
        <name>Mn(2+)</name>
        <dbReference type="ChEBI" id="CHEBI:29035"/>
        <label>2</label>
    </ligand>
</feature>
<feature type="binding site" evidence="1">
    <location>
        <position position="262"/>
    </location>
    <ligand>
        <name>Mg(2+)</name>
        <dbReference type="ChEBI" id="CHEBI:18420"/>
        <label>2</label>
    </ligand>
</feature>
<feature type="binding site" evidence="1">
    <location>
        <position position="262"/>
    </location>
    <ligand>
        <name>Mn(2+)</name>
        <dbReference type="ChEBI" id="CHEBI:29035"/>
        <label>2</label>
    </ligand>
</feature>